<gene>
    <name evidence="1" type="primary">rpsN</name>
    <name type="ordered locus">SACE_0752</name>
</gene>
<dbReference type="EMBL" id="AM420293">
    <property type="protein sequence ID" value="CAM00093.1"/>
    <property type="molecule type" value="Genomic_DNA"/>
</dbReference>
<dbReference type="RefSeq" id="WP_009950116.1">
    <property type="nucleotide sequence ID" value="NC_009142.1"/>
</dbReference>
<dbReference type="SMR" id="A4F7R9"/>
<dbReference type="STRING" id="405948.SACE_0752"/>
<dbReference type="KEGG" id="sen:SACE_0752"/>
<dbReference type="eggNOG" id="COG0199">
    <property type="taxonomic scope" value="Bacteria"/>
</dbReference>
<dbReference type="HOGENOM" id="CLU_139869_0_1_11"/>
<dbReference type="OrthoDB" id="9810484at2"/>
<dbReference type="Proteomes" id="UP000006728">
    <property type="component" value="Chromosome"/>
</dbReference>
<dbReference type="GO" id="GO:0015935">
    <property type="term" value="C:small ribosomal subunit"/>
    <property type="evidence" value="ECO:0007669"/>
    <property type="project" value="TreeGrafter"/>
</dbReference>
<dbReference type="GO" id="GO:0019843">
    <property type="term" value="F:rRNA binding"/>
    <property type="evidence" value="ECO:0007669"/>
    <property type="project" value="UniProtKB-UniRule"/>
</dbReference>
<dbReference type="GO" id="GO:0003735">
    <property type="term" value="F:structural constituent of ribosome"/>
    <property type="evidence" value="ECO:0007669"/>
    <property type="project" value="InterPro"/>
</dbReference>
<dbReference type="GO" id="GO:0006412">
    <property type="term" value="P:translation"/>
    <property type="evidence" value="ECO:0007669"/>
    <property type="project" value="UniProtKB-UniRule"/>
</dbReference>
<dbReference type="FunFam" id="1.10.287.1480:FF:000001">
    <property type="entry name" value="30S ribosomal protein S14"/>
    <property type="match status" value="1"/>
</dbReference>
<dbReference type="Gene3D" id="1.10.287.1480">
    <property type="match status" value="1"/>
</dbReference>
<dbReference type="HAMAP" id="MF_00537">
    <property type="entry name" value="Ribosomal_uS14_1"/>
    <property type="match status" value="1"/>
</dbReference>
<dbReference type="InterPro" id="IPR001209">
    <property type="entry name" value="Ribosomal_uS14"/>
</dbReference>
<dbReference type="InterPro" id="IPR023036">
    <property type="entry name" value="Ribosomal_uS14_bac/plastid"/>
</dbReference>
<dbReference type="NCBIfam" id="NF006477">
    <property type="entry name" value="PRK08881.1"/>
    <property type="match status" value="1"/>
</dbReference>
<dbReference type="PANTHER" id="PTHR19836">
    <property type="entry name" value="30S RIBOSOMAL PROTEIN S14"/>
    <property type="match status" value="1"/>
</dbReference>
<dbReference type="PANTHER" id="PTHR19836:SF23">
    <property type="entry name" value="SMALL RIBOSOMAL SUBUNIT PROTEIN US14A"/>
    <property type="match status" value="1"/>
</dbReference>
<dbReference type="Pfam" id="PF00253">
    <property type="entry name" value="Ribosomal_S14"/>
    <property type="match status" value="1"/>
</dbReference>
<dbReference type="SUPFAM" id="SSF57716">
    <property type="entry name" value="Glucocorticoid receptor-like (DNA-binding domain)"/>
    <property type="match status" value="1"/>
</dbReference>
<protein>
    <recommendedName>
        <fullName evidence="1">Small ribosomal subunit protein uS14A</fullName>
    </recommendedName>
    <alternativeName>
        <fullName evidence="3">30S ribosomal protein S14</fullName>
    </alternativeName>
</protein>
<keyword id="KW-1185">Reference proteome</keyword>
<keyword id="KW-0687">Ribonucleoprotein</keyword>
<keyword id="KW-0689">Ribosomal protein</keyword>
<keyword id="KW-0694">RNA-binding</keyword>
<keyword id="KW-0699">rRNA-binding</keyword>
<organism>
    <name type="scientific">Saccharopolyspora erythraea (strain ATCC 11635 / DSM 40517 / JCM 4748 / NBRC 13426 / NCIMB 8594 / NRRL 2338)</name>
    <dbReference type="NCBI Taxonomy" id="405948"/>
    <lineage>
        <taxon>Bacteria</taxon>
        <taxon>Bacillati</taxon>
        <taxon>Actinomycetota</taxon>
        <taxon>Actinomycetes</taxon>
        <taxon>Pseudonocardiales</taxon>
        <taxon>Pseudonocardiaceae</taxon>
        <taxon>Saccharopolyspora</taxon>
    </lineage>
</organism>
<reference key="1">
    <citation type="journal article" date="2007" name="Nat. Biotechnol.">
        <title>Complete genome sequence of the erythromycin-producing bacterium Saccharopolyspora erythraea NRRL23338.</title>
        <authorList>
            <person name="Oliynyk M."/>
            <person name="Samborskyy M."/>
            <person name="Lester J.B."/>
            <person name="Mironenko T."/>
            <person name="Scott N."/>
            <person name="Dickens S."/>
            <person name="Haydock S.F."/>
            <person name="Leadlay P.F."/>
        </authorList>
    </citation>
    <scope>NUCLEOTIDE SEQUENCE [LARGE SCALE GENOMIC DNA]</scope>
    <source>
        <strain>ATCC 11635 / DSM 40517 / JCM 4748 / NBRC 13426 / NCIMB 8594 / NRRL 2338</strain>
    </source>
</reference>
<feature type="chain" id="PRO_1000128554" description="Small ribosomal subunit protein uS14A">
    <location>
        <begin position="1"/>
        <end position="101"/>
    </location>
</feature>
<feature type="region of interest" description="Disordered" evidence="2">
    <location>
        <begin position="31"/>
        <end position="69"/>
    </location>
</feature>
<feature type="compositionally biased region" description="Basic and acidic residues" evidence="2">
    <location>
        <begin position="38"/>
        <end position="53"/>
    </location>
</feature>
<evidence type="ECO:0000255" key="1">
    <source>
        <dbReference type="HAMAP-Rule" id="MF_00537"/>
    </source>
</evidence>
<evidence type="ECO:0000256" key="2">
    <source>
        <dbReference type="SAM" id="MobiDB-lite"/>
    </source>
</evidence>
<evidence type="ECO:0000305" key="3"/>
<comment type="function">
    <text evidence="1">Binds 16S rRNA, required for the assembly of 30S particles and may also be responsible for determining the conformation of the 16S rRNA at the A site.</text>
</comment>
<comment type="subunit">
    <text evidence="1">Part of the 30S ribosomal subunit. Contacts proteins S3 and S10.</text>
</comment>
<comment type="similarity">
    <text evidence="1">Belongs to the universal ribosomal protein uS14 family.</text>
</comment>
<accession>A4F7R9</accession>
<name>RS14_SACEN</name>
<proteinExistence type="inferred from homology"/>
<sequence>MAKKSKIARDAQRRAVVARYAQRRAELKRIIAAPGSSPEERAAAQQELRRQPRDASATRLRNRDAVDGRPRGYFRKFGLSRVRLRQLAHSGELPGVTKSSW</sequence>